<accession>O25890</accession>
<proteinExistence type="inferred from homology"/>
<gene>
    <name evidence="1" type="primary">dnaJ</name>
    <name type="ordered locus">HP_1332</name>
</gene>
<dbReference type="EMBL" id="AE000511">
    <property type="protein sequence ID" value="AAD08373.1"/>
    <property type="molecule type" value="Genomic_DNA"/>
</dbReference>
<dbReference type="PIR" id="D64686">
    <property type="entry name" value="D64686"/>
</dbReference>
<dbReference type="RefSeq" id="NP_208124.1">
    <property type="nucleotide sequence ID" value="NC_000915.1"/>
</dbReference>
<dbReference type="RefSeq" id="WP_000423848.1">
    <property type="nucleotide sequence ID" value="NC_018939.1"/>
</dbReference>
<dbReference type="SMR" id="O25890"/>
<dbReference type="DIP" id="DIP-3240N"/>
<dbReference type="FunCoup" id="O25890">
    <property type="interactions" value="407"/>
</dbReference>
<dbReference type="IntAct" id="O25890">
    <property type="interactions" value="7"/>
</dbReference>
<dbReference type="MINT" id="O25890"/>
<dbReference type="STRING" id="85962.HP_1332"/>
<dbReference type="PaxDb" id="85962-C694_06875"/>
<dbReference type="EnsemblBacteria" id="AAD08373">
    <property type="protein sequence ID" value="AAD08373"/>
    <property type="gene ID" value="HP_1332"/>
</dbReference>
<dbReference type="KEGG" id="heo:C694_06875"/>
<dbReference type="KEGG" id="hpy:HP_1332"/>
<dbReference type="PATRIC" id="fig|85962.47.peg.1426"/>
<dbReference type="eggNOG" id="COG0484">
    <property type="taxonomic scope" value="Bacteria"/>
</dbReference>
<dbReference type="InParanoid" id="O25890"/>
<dbReference type="OrthoDB" id="9779889at2"/>
<dbReference type="PhylomeDB" id="O25890"/>
<dbReference type="Proteomes" id="UP000000429">
    <property type="component" value="Chromosome"/>
</dbReference>
<dbReference type="GO" id="GO:0005737">
    <property type="term" value="C:cytoplasm"/>
    <property type="evidence" value="ECO:0000318"/>
    <property type="project" value="GO_Central"/>
</dbReference>
<dbReference type="GO" id="GO:0005524">
    <property type="term" value="F:ATP binding"/>
    <property type="evidence" value="ECO:0007669"/>
    <property type="project" value="InterPro"/>
</dbReference>
<dbReference type="GO" id="GO:0031072">
    <property type="term" value="F:heat shock protein binding"/>
    <property type="evidence" value="ECO:0007669"/>
    <property type="project" value="InterPro"/>
</dbReference>
<dbReference type="GO" id="GO:0051082">
    <property type="term" value="F:unfolded protein binding"/>
    <property type="evidence" value="ECO:0000318"/>
    <property type="project" value="GO_Central"/>
</dbReference>
<dbReference type="GO" id="GO:0008270">
    <property type="term" value="F:zinc ion binding"/>
    <property type="evidence" value="ECO:0007669"/>
    <property type="project" value="UniProtKB-UniRule"/>
</dbReference>
<dbReference type="GO" id="GO:0051085">
    <property type="term" value="P:chaperone cofactor-dependent protein refolding"/>
    <property type="evidence" value="ECO:0000318"/>
    <property type="project" value="GO_Central"/>
</dbReference>
<dbReference type="GO" id="GO:0006260">
    <property type="term" value="P:DNA replication"/>
    <property type="evidence" value="ECO:0007669"/>
    <property type="project" value="UniProtKB-KW"/>
</dbReference>
<dbReference type="GO" id="GO:0042026">
    <property type="term" value="P:protein refolding"/>
    <property type="evidence" value="ECO:0000318"/>
    <property type="project" value="GO_Central"/>
</dbReference>
<dbReference type="GO" id="GO:0009408">
    <property type="term" value="P:response to heat"/>
    <property type="evidence" value="ECO:0007669"/>
    <property type="project" value="InterPro"/>
</dbReference>
<dbReference type="CDD" id="cd06257">
    <property type="entry name" value="DnaJ"/>
    <property type="match status" value="1"/>
</dbReference>
<dbReference type="CDD" id="cd10747">
    <property type="entry name" value="DnaJ_C"/>
    <property type="match status" value="1"/>
</dbReference>
<dbReference type="CDD" id="cd10719">
    <property type="entry name" value="DnaJ_zf"/>
    <property type="match status" value="1"/>
</dbReference>
<dbReference type="FunFam" id="1.10.287.110:FF:000034">
    <property type="entry name" value="Chaperone protein DnaJ"/>
    <property type="match status" value="1"/>
</dbReference>
<dbReference type="FunFam" id="2.10.230.10:FF:000002">
    <property type="entry name" value="Molecular chaperone DnaJ"/>
    <property type="match status" value="1"/>
</dbReference>
<dbReference type="Gene3D" id="1.10.287.110">
    <property type="entry name" value="DnaJ domain"/>
    <property type="match status" value="1"/>
</dbReference>
<dbReference type="Gene3D" id="2.10.230.10">
    <property type="entry name" value="Heat shock protein DnaJ, cysteine-rich domain"/>
    <property type="match status" value="1"/>
</dbReference>
<dbReference type="Gene3D" id="2.60.260.20">
    <property type="entry name" value="Urease metallochaperone UreE, N-terminal domain"/>
    <property type="match status" value="2"/>
</dbReference>
<dbReference type="HAMAP" id="MF_01152">
    <property type="entry name" value="DnaJ"/>
    <property type="match status" value="1"/>
</dbReference>
<dbReference type="InterPro" id="IPR012724">
    <property type="entry name" value="DnaJ"/>
</dbReference>
<dbReference type="InterPro" id="IPR002939">
    <property type="entry name" value="DnaJ_C"/>
</dbReference>
<dbReference type="InterPro" id="IPR001623">
    <property type="entry name" value="DnaJ_domain"/>
</dbReference>
<dbReference type="InterPro" id="IPR008971">
    <property type="entry name" value="HSP40/DnaJ_pept-bd"/>
</dbReference>
<dbReference type="InterPro" id="IPR001305">
    <property type="entry name" value="HSP_DnaJ_Cys-rich_dom"/>
</dbReference>
<dbReference type="InterPro" id="IPR036410">
    <property type="entry name" value="HSP_DnaJ_Cys-rich_dom_sf"/>
</dbReference>
<dbReference type="InterPro" id="IPR036869">
    <property type="entry name" value="J_dom_sf"/>
</dbReference>
<dbReference type="NCBIfam" id="TIGR02349">
    <property type="entry name" value="DnaJ_bact"/>
    <property type="match status" value="1"/>
</dbReference>
<dbReference type="NCBIfam" id="NF008035">
    <property type="entry name" value="PRK10767.1"/>
    <property type="match status" value="1"/>
</dbReference>
<dbReference type="NCBIfam" id="NF010881">
    <property type="entry name" value="PRK14288.1"/>
    <property type="match status" value="1"/>
</dbReference>
<dbReference type="PANTHER" id="PTHR43096:SF48">
    <property type="entry name" value="CHAPERONE PROTEIN DNAJ"/>
    <property type="match status" value="1"/>
</dbReference>
<dbReference type="PANTHER" id="PTHR43096">
    <property type="entry name" value="DNAJ HOMOLOG 1, MITOCHONDRIAL-RELATED"/>
    <property type="match status" value="1"/>
</dbReference>
<dbReference type="Pfam" id="PF00226">
    <property type="entry name" value="DnaJ"/>
    <property type="match status" value="1"/>
</dbReference>
<dbReference type="Pfam" id="PF01556">
    <property type="entry name" value="DnaJ_C"/>
    <property type="match status" value="1"/>
</dbReference>
<dbReference type="Pfam" id="PF00684">
    <property type="entry name" value="DnaJ_CXXCXGXG"/>
    <property type="match status" value="1"/>
</dbReference>
<dbReference type="PRINTS" id="PR00625">
    <property type="entry name" value="JDOMAIN"/>
</dbReference>
<dbReference type="SMART" id="SM00271">
    <property type="entry name" value="DnaJ"/>
    <property type="match status" value="1"/>
</dbReference>
<dbReference type="SUPFAM" id="SSF46565">
    <property type="entry name" value="Chaperone J-domain"/>
    <property type="match status" value="1"/>
</dbReference>
<dbReference type="SUPFAM" id="SSF57938">
    <property type="entry name" value="DnaJ/Hsp40 cysteine-rich domain"/>
    <property type="match status" value="1"/>
</dbReference>
<dbReference type="SUPFAM" id="SSF49493">
    <property type="entry name" value="HSP40/DnaJ peptide-binding domain"/>
    <property type="match status" value="2"/>
</dbReference>
<dbReference type="PROSITE" id="PS50076">
    <property type="entry name" value="DNAJ_2"/>
    <property type="match status" value="1"/>
</dbReference>
<dbReference type="PROSITE" id="PS51188">
    <property type="entry name" value="ZF_CR"/>
    <property type="match status" value="1"/>
</dbReference>
<organism>
    <name type="scientific">Helicobacter pylori (strain ATCC 700392 / 26695)</name>
    <name type="common">Campylobacter pylori</name>
    <dbReference type="NCBI Taxonomy" id="85962"/>
    <lineage>
        <taxon>Bacteria</taxon>
        <taxon>Pseudomonadati</taxon>
        <taxon>Campylobacterota</taxon>
        <taxon>Epsilonproteobacteria</taxon>
        <taxon>Campylobacterales</taxon>
        <taxon>Helicobacteraceae</taxon>
        <taxon>Helicobacter</taxon>
    </lineage>
</organism>
<sequence length="369" mass="41851">MELSYYEILEVEKHSNQETIKKSYRKLALKYHPDRNAGDKEAEEKFKLINEAYGVLSDEKKRALYDRYGKKGLNQAGASQGDFSDFFEDLGSFFEDAFGFGARGSKRQKSSIAPDYLQTLELSFKEAVFGCKKTIKVQYQSVCESCDGTGAKDKALETCKQCNGQGQVFMRQGFMSFAQTCGACQGKGKIVKTPCQACKGKTYILKDEEIDAIIPEGIDDQNRMVLKNKGNEYEKGKRGDLYLEAQVKEDEHFKREGCDLFIKAPVFFTTIALGHTIKVPSLKGDELELKIPRNARDKQTFAFRNEGVKHPESSYRGSLIVELQVIYPKSLNKEQQELLEKLHASFGYEGEPHKSVLETCISKIKDWFK</sequence>
<keyword id="KW-0143">Chaperone</keyword>
<keyword id="KW-0963">Cytoplasm</keyword>
<keyword id="KW-0235">DNA replication</keyword>
<keyword id="KW-0479">Metal-binding</keyword>
<keyword id="KW-1185">Reference proteome</keyword>
<keyword id="KW-0677">Repeat</keyword>
<keyword id="KW-0346">Stress response</keyword>
<keyword id="KW-0862">Zinc</keyword>
<keyword id="KW-0863">Zinc-finger</keyword>
<protein>
    <recommendedName>
        <fullName evidence="1">Chaperone protein DnaJ</fullName>
    </recommendedName>
</protein>
<name>DNAJ_HELPY</name>
<reference key="1">
    <citation type="journal article" date="1997" name="Nature">
        <title>The complete genome sequence of the gastric pathogen Helicobacter pylori.</title>
        <authorList>
            <person name="Tomb J.-F."/>
            <person name="White O."/>
            <person name="Kerlavage A.R."/>
            <person name="Clayton R.A."/>
            <person name="Sutton G.G."/>
            <person name="Fleischmann R.D."/>
            <person name="Ketchum K.A."/>
            <person name="Klenk H.-P."/>
            <person name="Gill S.R."/>
            <person name="Dougherty B.A."/>
            <person name="Nelson K.E."/>
            <person name="Quackenbush J."/>
            <person name="Zhou L."/>
            <person name="Kirkness E.F."/>
            <person name="Peterson S.N."/>
            <person name="Loftus B.J."/>
            <person name="Richardson D.L."/>
            <person name="Dodson R.J."/>
            <person name="Khalak H.G."/>
            <person name="Glodek A."/>
            <person name="McKenney K."/>
            <person name="FitzGerald L.M."/>
            <person name="Lee N."/>
            <person name="Adams M.D."/>
            <person name="Hickey E.K."/>
            <person name="Berg D.E."/>
            <person name="Gocayne J.D."/>
            <person name="Utterback T.R."/>
            <person name="Peterson J.D."/>
            <person name="Kelley J.M."/>
            <person name="Cotton M.D."/>
            <person name="Weidman J.F."/>
            <person name="Fujii C."/>
            <person name="Bowman C."/>
            <person name="Watthey L."/>
            <person name="Wallin E."/>
            <person name="Hayes W.S."/>
            <person name="Borodovsky M."/>
            <person name="Karp P.D."/>
            <person name="Smith H.O."/>
            <person name="Fraser C.M."/>
            <person name="Venter J.C."/>
        </authorList>
    </citation>
    <scope>NUCLEOTIDE SEQUENCE [LARGE SCALE GENOMIC DNA]</scope>
    <source>
        <strain>ATCC 700392 / 26695</strain>
    </source>
</reference>
<feature type="chain" id="PRO_0000070796" description="Chaperone protein DnaJ">
    <location>
        <begin position="1"/>
        <end position="369"/>
    </location>
</feature>
<feature type="domain" description="J" evidence="1">
    <location>
        <begin position="4"/>
        <end position="69"/>
    </location>
</feature>
<feature type="repeat" description="CXXCXGXG motif">
    <location>
        <begin position="143"/>
        <end position="150"/>
    </location>
</feature>
<feature type="repeat" description="CXXCXGXG motif">
    <location>
        <begin position="159"/>
        <end position="166"/>
    </location>
</feature>
<feature type="repeat" description="CXXCXGXG motif">
    <location>
        <begin position="181"/>
        <end position="188"/>
    </location>
</feature>
<feature type="repeat" description="CXXCXGXG motif">
    <location>
        <begin position="195"/>
        <end position="202"/>
    </location>
</feature>
<feature type="zinc finger region" description="CR-type" evidence="1">
    <location>
        <begin position="130"/>
        <end position="207"/>
    </location>
</feature>
<feature type="binding site" evidence="1">
    <location>
        <position position="143"/>
    </location>
    <ligand>
        <name>Zn(2+)</name>
        <dbReference type="ChEBI" id="CHEBI:29105"/>
        <label>1</label>
    </ligand>
</feature>
<feature type="binding site" evidence="1">
    <location>
        <position position="146"/>
    </location>
    <ligand>
        <name>Zn(2+)</name>
        <dbReference type="ChEBI" id="CHEBI:29105"/>
        <label>1</label>
    </ligand>
</feature>
<feature type="binding site" evidence="1">
    <location>
        <position position="159"/>
    </location>
    <ligand>
        <name>Zn(2+)</name>
        <dbReference type="ChEBI" id="CHEBI:29105"/>
        <label>2</label>
    </ligand>
</feature>
<feature type="binding site" evidence="1">
    <location>
        <position position="162"/>
    </location>
    <ligand>
        <name>Zn(2+)</name>
        <dbReference type="ChEBI" id="CHEBI:29105"/>
        <label>2</label>
    </ligand>
</feature>
<feature type="binding site" evidence="1">
    <location>
        <position position="181"/>
    </location>
    <ligand>
        <name>Zn(2+)</name>
        <dbReference type="ChEBI" id="CHEBI:29105"/>
        <label>2</label>
    </ligand>
</feature>
<feature type="binding site" evidence="1">
    <location>
        <position position="184"/>
    </location>
    <ligand>
        <name>Zn(2+)</name>
        <dbReference type="ChEBI" id="CHEBI:29105"/>
        <label>2</label>
    </ligand>
</feature>
<feature type="binding site" evidence="1">
    <location>
        <position position="195"/>
    </location>
    <ligand>
        <name>Zn(2+)</name>
        <dbReference type="ChEBI" id="CHEBI:29105"/>
        <label>1</label>
    </ligand>
</feature>
<feature type="binding site" evidence="1">
    <location>
        <position position="198"/>
    </location>
    <ligand>
        <name>Zn(2+)</name>
        <dbReference type="ChEBI" id="CHEBI:29105"/>
        <label>1</label>
    </ligand>
</feature>
<comment type="function">
    <text evidence="1">Participates actively in the response to hyperosmotic and heat shock by preventing the aggregation of stress-denatured proteins and by disaggregating proteins, also in an autonomous, DnaK-independent fashion. Unfolded proteins bind initially to DnaJ; upon interaction with the DnaJ-bound protein, DnaK hydrolyzes its bound ATP, resulting in the formation of a stable complex. GrpE releases ADP from DnaK; ATP binding to DnaK triggers the release of the substrate protein, thus completing the reaction cycle. Several rounds of ATP-dependent interactions between DnaJ, DnaK and GrpE are required for fully efficient folding. Also involved, together with DnaK and GrpE, in the DNA replication of plasmids through activation of initiation proteins.</text>
</comment>
<comment type="cofactor">
    <cofactor evidence="1">
        <name>Zn(2+)</name>
        <dbReference type="ChEBI" id="CHEBI:29105"/>
    </cofactor>
    <text evidence="1">Binds 2 Zn(2+) ions per monomer.</text>
</comment>
<comment type="subunit">
    <text evidence="1">Homodimer.</text>
</comment>
<comment type="subcellular location">
    <subcellularLocation>
        <location evidence="1">Cytoplasm</location>
    </subcellularLocation>
</comment>
<comment type="domain">
    <text evidence="1">The J domain is necessary and sufficient to stimulate DnaK ATPase activity. Zinc center 1 plays an important role in the autonomous, DnaK-independent chaperone activity of DnaJ. Zinc center 2 is essential for interaction with DnaK and for DnaJ activity.</text>
</comment>
<comment type="similarity">
    <text evidence="1">Belongs to the DnaJ family.</text>
</comment>
<evidence type="ECO:0000255" key="1">
    <source>
        <dbReference type="HAMAP-Rule" id="MF_01152"/>
    </source>
</evidence>